<gene>
    <name type="primary">Amh</name>
</gene>
<feature type="signal peptide" evidence="3">
    <location>
        <begin position="1"/>
        <end position="22"/>
    </location>
</feature>
<feature type="propeptide" id="PRO_0000033752" evidence="1">
    <location>
        <begin position="23"/>
        <end position="445"/>
    </location>
</feature>
<feature type="chain" id="PRO_0000033753" description="Muellerian-inhibiting factor">
    <location>
        <begin position="446"/>
        <end position="553"/>
    </location>
</feature>
<feature type="site" description="Cleavage" evidence="1">
    <location>
        <begin position="445"/>
        <end position="446"/>
    </location>
</feature>
<feature type="glycosylation site" description="N-linked (GlcNAc...) asparagine" evidence="3">
    <location>
        <position position="325"/>
    </location>
</feature>
<feature type="glycosylation site" description="N-linked (GlcNAc...) asparagine" evidence="3">
    <location>
        <position position="409"/>
    </location>
</feature>
<feature type="disulfide bond" evidence="1">
    <location>
        <begin position="455"/>
        <end position="519"/>
    </location>
</feature>
<feature type="disulfide bond" evidence="1">
    <location>
        <begin position="481"/>
        <end position="550"/>
    </location>
</feature>
<feature type="disulfide bond" evidence="1">
    <location>
        <begin position="485"/>
        <end position="552"/>
    </location>
</feature>
<feature type="disulfide bond" description="Interchain" evidence="1">
    <location>
        <position position="518"/>
    </location>
</feature>
<evidence type="ECO:0000250" key="1">
    <source>
        <dbReference type="UniProtKB" id="P03971"/>
    </source>
</evidence>
<evidence type="ECO:0000250" key="2">
    <source>
        <dbReference type="UniProtKB" id="P27106"/>
    </source>
</evidence>
<evidence type="ECO:0000255" key="3"/>
<evidence type="ECO:0000269" key="4">
    <source>
    </source>
</evidence>
<evidence type="ECO:0000305" key="5"/>
<proteinExistence type="evidence at transcript level"/>
<dbReference type="EMBL" id="S98336">
    <property type="protein sequence ID" value="AAB22104.1"/>
    <property type="molecule type" value="Genomic_DNA"/>
</dbReference>
<dbReference type="PIR" id="A42499">
    <property type="entry name" value="A42499"/>
</dbReference>
<dbReference type="RefSeq" id="NP_037034.1">
    <property type="nucleotide sequence ID" value="NM_012902.2"/>
</dbReference>
<dbReference type="SMR" id="P49000"/>
<dbReference type="FunCoup" id="P49000">
    <property type="interactions" value="264"/>
</dbReference>
<dbReference type="STRING" id="10116.ENSRNOP00000026220"/>
<dbReference type="CarbonylDB" id="P49000"/>
<dbReference type="GlyCosmos" id="P49000">
    <property type="glycosylation" value="2 sites, No reported glycans"/>
</dbReference>
<dbReference type="GlyGen" id="P49000">
    <property type="glycosylation" value="3 sites"/>
</dbReference>
<dbReference type="PhosphoSitePlus" id="P49000"/>
<dbReference type="PaxDb" id="10116-ENSRNOP00000026220"/>
<dbReference type="Ensembl" id="ENSRNOT00000026220.3">
    <property type="protein sequence ID" value="ENSRNOP00000026220.1"/>
    <property type="gene ID" value="ENSRNOG00000019377.3"/>
</dbReference>
<dbReference type="GeneID" id="25378"/>
<dbReference type="KEGG" id="rno:25378"/>
<dbReference type="UCSC" id="RGD:2108">
    <property type="organism name" value="rat"/>
</dbReference>
<dbReference type="AGR" id="RGD:2108"/>
<dbReference type="CTD" id="268"/>
<dbReference type="RGD" id="2108">
    <property type="gene designation" value="Amh"/>
</dbReference>
<dbReference type="eggNOG" id="KOG3900">
    <property type="taxonomic scope" value="Eukaryota"/>
</dbReference>
<dbReference type="GeneTree" id="ENSGT00390000006337"/>
<dbReference type="HOGENOM" id="CLU_025681_1_0_1"/>
<dbReference type="InParanoid" id="P49000"/>
<dbReference type="OMA" id="HRCFTRM"/>
<dbReference type="OrthoDB" id="9893739at2759"/>
<dbReference type="PhylomeDB" id="P49000"/>
<dbReference type="TreeFam" id="TF335595"/>
<dbReference type="Reactome" id="R-RNO-201451">
    <property type="pathway name" value="Signaling by BMP"/>
</dbReference>
<dbReference type="PRO" id="PR:P49000"/>
<dbReference type="Proteomes" id="UP000002494">
    <property type="component" value="Chromosome 7"/>
</dbReference>
<dbReference type="Bgee" id="ENSRNOG00000019377">
    <property type="expression patterns" value="Expressed in ovary and 4 other cell types or tissues"/>
</dbReference>
<dbReference type="GO" id="GO:0005737">
    <property type="term" value="C:cytoplasm"/>
    <property type="evidence" value="ECO:0000266"/>
    <property type="project" value="RGD"/>
</dbReference>
<dbReference type="GO" id="GO:0005615">
    <property type="term" value="C:extracellular space"/>
    <property type="evidence" value="ECO:0000314"/>
    <property type="project" value="MGI"/>
</dbReference>
<dbReference type="GO" id="GO:0008083">
    <property type="term" value="F:growth factor activity"/>
    <property type="evidence" value="ECO:0007669"/>
    <property type="project" value="UniProtKB-KW"/>
</dbReference>
<dbReference type="GO" id="GO:0005102">
    <property type="term" value="F:signaling receptor binding"/>
    <property type="evidence" value="ECO:0000266"/>
    <property type="project" value="RGD"/>
</dbReference>
<dbReference type="GO" id="GO:0005160">
    <property type="term" value="F:transforming growth factor beta receptor binding"/>
    <property type="evidence" value="ECO:0000314"/>
    <property type="project" value="MGI"/>
</dbReference>
<dbReference type="GO" id="GO:0005114">
    <property type="term" value="F:type II transforming growth factor beta receptor binding"/>
    <property type="evidence" value="ECO:0000250"/>
    <property type="project" value="UniProtKB"/>
</dbReference>
<dbReference type="GO" id="GO:1990262">
    <property type="term" value="P:anti-Mullerian hormone receptor signaling pathway"/>
    <property type="evidence" value="ECO:0000250"/>
    <property type="project" value="UniProtKB"/>
</dbReference>
<dbReference type="GO" id="GO:0007506">
    <property type="term" value="P:gonadal mesoderm development"/>
    <property type="evidence" value="ECO:0007669"/>
    <property type="project" value="UniProtKB-KW"/>
</dbReference>
<dbReference type="GO" id="GO:0033327">
    <property type="term" value="P:Leydig cell differentiation"/>
    <property type="evidence" value="ECO:0000250"/>
    <property type="project" value="UniProtKB"/>
</dbReference>
<dbReference type="GO" id="GO:0001880">
    <property type="term" value="P:Mullerian duct regression"/>
    <property type="evidence" value="ECO:0000250"/>
    <property type="project" value="UniProtKB"/>
</dbReference>
<dbReference type="GO" id="GO:2000355">
    <property type="term" value="P:negative regulation of ovarian follicle development"/>
    <property type="evidence" value="ECO:0000314"/>
    <property type="project" value="RGD"/>
</dbReference>
<dbReference type="GO" id="GO:0001541">
    <property type="term" value="P:ovarian follicle development"/>
    <property type="evidence" value="ECO:0000266"/>
    <property type="project" value="RGD"/>
</dbReference>
<dbReference type="GO" id="GO:0010628">
    <property type="term" value="P:positive regulation of gene expression"/>
    <property type="evidence" value="ECO:0000266"/>
    <property type="project" value="RGD"/>
</dbReference>
<dbReference type="GO" id="GO:0060391">
    <property type="term" value="P:positive regulation of SMAD protein signal transduction"/>
    <property type="evidence" value="ECO:0000266"/>
    <property type="project" value="RGD"/>
</dbReference>
<dbReference type="GO" id="GO:0001546">
    <property type="term" value="P:preantral ovarian follicle growth"/>
    <property type="evidence" value="ECO:0000314"/>
    <property type="project" value="RGD"/>
</dbReference>
<dbReference type="GO" id="GO:0009410">
    <property type="term" value="P:response to xenobiotic stimulus"/>
    <property type="evidence" value="ECO:0000270"/>
    <property type="project" value="RGD"/>
</dbReference>
<dbReference type="GO" id="GO:0007530">
    <property type="term" value="P:sex determination"/>
    <property type="evidence" value="ECO:0000266"/>
    <property type="project" value="RGD"/>
</dbReference>
<dbReference type="GO" id="GO:0001655">
    <property type="term" value="P:urogenital system development"/>
    <property type="evidence" value="ECO:0000314"/>
    <property type="project" value="MGI"/>
</dbReference>
<dbReference type="CDD" id="cd13757">
    <property type="entry name" value="TGF_beta_AMH"/>
    <property type="match status" value="1"/>
</dbReference>
<dbReference type="FunFam" id="2.10.90.10:FF:000033">
    <property type="entry name" value="Muellerian-inhibiting factor"/>
    <property type="match status" value="1"/>
</dbReference>
<dbReference type="Gene3D" id="2.10.90.10">
    <property type="entry name" value="Cystine-knot cytokines"/>
    <property type="match status" value="1"/>
</dbReference>
<dbReference type="InterPro" id="IPR006799">
    <property type="entry name" value="AMH_N"/>
</dbReference>
<dbReference type="InterPro" id="IPR029034">
    <property type="entry name" value="Cystine-knot_cytokine"/>
</dbReference>
<dbReference type="InterPro" id="IPR021203">
    <property type="entry name" value="Muellerian-inhibiting_factor"/>
</dbReference>
<dbReference type="InterPro" id="IPR001839">
    <property type="entry name" value="TGF-b_C"/>
</dbReference>
<dbReference type="InterPro" id="IPR017948">
    <property type="entry name" value="TGFb_CS"/>
</dbReference>
<dbReference type="PANTHER" id="PTHR15009">
    <property type="entry name" value="MUELLERIAN-INHIBITING FACTOR"/>
    <property type="match status" value="1"/>
</dbReference>
<dbReference type="PANTHER" id="PTHR15009:SF4">
    <property type="entry name" value="MUELLERIAN-INHIBITING FACTOR"/>
    <property type="match status" value="1"/>
</dbReference>
<dbReference type="Pfam" id="PF04709">
    <property type="entry name" value="AMH_N"/>
    <property type="match status" value="1"/>
</dbReference>
<dbReference type="Pfam" id="PF00019">
    <property type="entry name" value="TGF_beta"/>
    <property type="match status" value="1"/>
</dbReference>
<dbReference type="PIRSF" id="PIRSF037270">
    <property type="entry name" value="Muellerian-inhibiting_factor"/>
    <property type="match status" value="1"/>
</dbReference>
<dbReference type="SMART" id="SM00204">
    <property type="entry name" value="TGFB"/>
    <property type="match status" value="1"/>
</dbReference>
<dbReference type="SUPFAM" id="SSF57501">
    <property type="entry name" value="Cystine-knot cytokines"/>
    <property type="match status" value="1"/>
</dbReference>
<dbReference type="PROSITE" id="PS00250">
    <property type="entry name" value="TGF_BETA_1"/>
    <property type="match status" value="1"/>
</dbReference>
<dbReference type="PROSITE" id="PS51362">
    <property type="entry name" value="TGF_BETA_2"/>
    <property type="match status" value="1"/>
</dbReference>
<reference key="1">
    <citation type="journal article" date="1992" name="Genomics">
        <title>Isolation of the rat gene for Mullerian inhibiting substance.</title>
        <authorList>
            <person name="Haqq C."/>
            <person name="Lee M.M."/>
            <person name="Tizard R."/>
            <person name="Wysk M."/>
            <person name="Demarinis J."/>
            <person name="Donahoe P.K."/>
            <person name="Cate R.L."/>
        </authorList>
    </citation>
    <scope>NUCLEOTIDE SEQUENCE [GENOMIC DNA]</scope>
</reference>
<reference key="2">
    <citation type="journal article" date="1995" name="Endocrinology">
        <title>Anti-muellerian hormone and anti-muellerian hormone type II receptor messenger ribonucleic acid expression in rat ovaries during postnatal development, the estrous cycle, and gonadotropin-induced follicle growth.</title>
        <authorList>
            <person name="Baarends W.M."/>
            <person name="Uilenbroek J.T."/>
            <person name="Kramer P."/>
            <person name="Hoogerbrugge J.W."/>
            <person name="van Leeuwen E.C."/>
            <person name="Themmen A.P."/>
            <person name="Grootegoed J.A."/>
        </authorList>
    </citation>
    <scope>TISSUE SPECIFICITY</scope>
</reference>
<accession>P49000</accession>
<sequence length="553" mass="58889">MQGPHLSLLLLLLATMGAVLQADTVEELTNTRGLIFLEDGVWPPSSPPEPLCLVAVRGEGDTSKASLTVVGGLHSYEHAFLEAVQESRWGPQDLATFGVCSTDSQTTLPALQRLGAWLGETGEQQLLVLHLAEVIWEPQLLLKFQEPPPGGASRWEQALLVLYPGPGPQVTVTGAGLQGTQSLCPTRDTRYLVLTVHFPAGAWSGSGLALTLQPSKEGATLTIAQLQAFLFGSDSRCFTRMTPTLVLLPPTGPTPQPAHGQLDTVPFPQPGLSLEPEDLPHSADPFLETLTRLVRALRGPLTRASNTRLALDPGALASFPQGLVNLSDPVALGRLLDGEEPLLLLLSPAAATVGEPMRLHSPTSAPWAAGLARRVAVELQAAASELRDLPGLPPTAPPLLSRLLALCPNDSRSAGDPLRALLLLKALQGLRAEWRGREGRGRAGRSKGTGTDGLCALRELSVDLRAERSVLIPETYQANNCQGACAWPQSDRNPRYGNHVVLLLKMQARGAALGRLPCCVPTAYTGKLLISLSEEHISAHHVPNMVATECGCR</sequence>
<organism>
    <name type="scientific">Rattus norvegicus</name>
    <name type="common">Rat</name>
    <dbReference type="NCBI Taxonomy" id="10116"/>
    <lineage>
        <taxon>Eukaryota</taxon>
        <taxon>Metazoa</taxon>
        <taxon>Chordata</taxon>
        <taxon>Craniata</taxon>
        <taxon>Vertebrata</taxon>
        <taxon>Euteleostomi</taxon>
        <taxon>Mammalia</taxon>
        <taxon>Eutheria</taxon>
        <taxon>Euarchontoglires</taxon>
        <taxon>Glires</taxon>
        <taxon>Rodentia</taxon>
        <taxon>Myomorpha</taxon>
        <taxon>Muroidea</taxon>
        <taxon>Muridae</taxon>
        <taxon>Murinae</taxon>
        <taxon>Rattus</taxon>
    </lineage>
</organism>
<keyword id="KW-0221">Differentiation</keyword>
<keyword id="KW-1015">Disulfide bond</keyword>
<keyword id="KW-0325">Glycoprotein</keyword>
<keyword id="KW-0334">Gonadal differentiation</keyword>
<keyword id="KW-0339">Growth factor</keyword>
<keyword id="KW-1185">Reference proteome</keyword>
<keyword id="KW-0964">Secreted</keyword>
<keyword id="KW-0732">Signal</keyword>
<comment type="function">
    <text evidence="1 2">Plays an important role in several reproductive functions. Induces Muellerian duct regression during male fetal sexual differentiation and plays a role in Leydig cell differentiation and function (By similarity). In female acts as a negative regulator of the primordial to primary follicle transition and decreases FSH sensitivity of growing follicles. AMH signals by binding to a specific type-II receptor, AMHR2, that heterodimerizes with type-I receptors (ACVR1 and BMPR1A), and recruiting SMAD proteins that are translocated to the nucleus to regulate target gene expression (By similarity).</text>
</comment>
<comment type="subunit">
    <text evidence="1">Homodimer; disulfide-linked.</text>
</comment>
<comment type="subcellular location">
    <subcellularLocation>
        <location evidence="1">Secreted</location>
    </subcellularLocation>
</comment>
<comment type="tissue specificity">
    <text evidence="4">Mainly expressed in granulosa cells from preantral and small antral follicles.</text>
</comment>
<comment type="PTM">
    <text evidence="1">Preproprotein is proteolytically processed to generate N- and C-terminal cleavage products that homodimerize and associate to form a biologically active non-covalent complex. Binding of the non-covalent complex to AMHR2 induces dissociation of the pro-region from the mature C-terminal dimer. The N-terminal portion of the protein, despite having no intrinsic activity, has the role of amplifying the activity of the C-terminus.</text>
</comment>
<comment type="similarity">
    <text evidence="5">Belongs to the TGF-beta family.</text>
</comment>
<name>MIS_RAT</name>
<protein>
    <recommendedName>
        <fullName>Muellerian-inhibiting factor</fullName>
    </recommendedName>
    <alternativeName>
        <fullName>Anti-Muellerian hormone</fullName>
        <shortName>AMH</shortName>
    </alternativeName>
    <alternativeName>
        <fullName>Muellerian-inhibiting substance</fullName>
        <shortName>MIS</shortName>
    </alternativeName>
</protein>